<evidence type="ECO:0000255" key="1">
    <source>
        <dbReference type="HAMAP-Rule" id="MF_01337"/>
    </source>
</evidence>
<evidence type="ECO:0000305" key="2"/>
<reference key="1">
    <citation type="journal article" date="2008" name="Proc. Natl. Acad. Sci. U.S.A.">
        <title>The genome of Clostridium kluyveri, a strict anaerobe with unique metabolic features.</title>
        <authorList>
            <person name="Seedorf H."/>
            <person name="Fricke W.F."/>
            <person name="Veith B."/>
            <person name="Brueggemann H."/>
            <person name="Liesegang H."/>
            <person name="Strittmatter A."/>
            <person name="Miethke M."/>
            <person name="Buckel W."/>
            <person name="Hinderberger J."/>
            <person name="Li F."/>
            <person name="Hagemeier C."/>
            <person name="Thauer R.K."/>
            <person name="Gottschalk G."/>
        </authorList>
    </citation>
    <scope>NUCLEOTIDE SEQUENCE [LARGE SCALE GENOMIC DNA]</scope>
    <source>
        <strain>ATCC 8527 / DSM 555 / NBRC 12016 / NCIMB 10680 / K1</strain>
    </source>
</reference>
<comment type="function">
    <text evidence="1">This is one of the proteins that bind and probably mediate the attachment of the 5S RNA into the large ribosomal subunit, where it forms part of the central protuberance.</text>
</comment>
<comment type="subunit">
    <text evidence="1">Part of the 50S ribosomal subunit; part of the 5S rRNA/L5/L18/L25 subcomplex. Contacts the 5S and 23S rRNAs.</text>
</comment>
<comment type="similarity">
    <text evidence="1">Belongs to the universal ribosomal protein uL18 family.</text>
</comment>
<organism>
    <name type="scientific">Clostridium kluyveri (strain ATCC 8527 / DSM 555 / NBRC 12016 / NCIMB 10680 / K1)</name>
    <dbReference type="NCBI Taxonomy" id="431943"/>
    <lineage>
        <taxon>Bacteria</taxon>
        <taxon>Bacillati</taxon>
        <taxon>Bacillota</taxon>
        <taxon>Clostridia</taxon>
        <taxon>Eubacteriales</taxon>
        <taxon>Clostridiaceae</taxon>
        <taxon>Clostridium</taxon>
    </lineage>
</organism>
<keyword id="KW-1185">Reference proteome</keyword>
<keyword id="KW-0687">Ribonucleoprotein</keyword>
<keyword id="KW-0689">Ribosomal protein</keyword>
<keyword id="KW-0694">RNA-binding</keyword>
<keyword id="KW-0699">rRNA-binding</keyword>
<accession>A5N4R3</accession>
<dbReference type="EMBL" id="CP000673">
    <property type="protein sequence ID" value="EDK32294.1"/>
    <property type="molecule type" value="Genomic_DNA"/>
</dbReference>
<dbReference type="RefSeq" id="WP_011988819.1">
    <property type="nucleotide sequence ID" value="NC_009706.1"/>
</dbReference>
<dbReference type="SMR" id="A5N4R3"/>
<dbReference type="STRING" id="431943.CKL_0240"/>
<dbReference type="KEGG" id="ckl:CKL_0240"/>
<dbReference type="eggNOG" id="COG0256">
    <property type="taxonomic scope" value="Bacteria"/>
</dbReference>
<dbReference type="HOGENOM" id="CLU_098841_0_1_9"/>
<dbReference type="Proteomes" id="UP000002411">
    <property type="component" value="Chromosome"/>
</dbReference>
<dbReference type="GO" id="GO:0022625">
    <property type="term" value="C:cytosolic large ribosomal subunit"/>
    <property type="evidence" value="ECO:0007669"/>
    <property type="project" value="TreeGrafter"/>
</dbReference>
<dbReference type="GO" id="GO:0008097">
    <property type="term" value="F:5S rRNA binding"/>
    <property type="evidence" value="ECO:0007669"/>
    <property type="project" value="TreeGrafter"/>
</dbReference>
<dbReference type="GO" id="GO:0003735">
    <property type="term" value="F:structural constituent of ribosome"/>
    <property type="evidence" value="ECO:0007669"/>
    <property type="project" value="InterPro"/>
</dbReference>
<dbReference type="GO" id="GO:0006412">
    <property type="term" value="P:translation"/>
    <property type="evidence" value="ECO:0007669"/>
    <property type="project" value="UniProtKB-UniRule"/>
</dbReference>
<dbReference type="CDD" id="cd00432">
    <property type="entry name" value="Ribosomal_L18_L5e"/>
    <property type="match status" value="1"/>
</dbReference>
<dbReference type="FunFam" id="3.30.420.100:FF:000001">
    <property type="entry name" value="50S ribosomal protein L18"/>
    <property type="match status" value="1"/>
</dbReference>
<dbReference type="Gene3D" id="3.30.420.100">
    <property type="match status" value="1"/>
</dbReference>
<dbReference type="HAMAP" id="MF_01337_B">
    <property type="entry name" value="Ribosomal_uL18_B"/>
    <property type="match status" value="1"/>
</dbReference>
<dbReference type="InterPro" id="IPR004389">
    <property type="entry name" value="Ribosomal_uL18_bac-type"/>
</dbReference>
<dbReference type="InterPro" id="IPR005484">
    <property type="entry name" value="Ribosomal_uL18_bac/euk"/>
</dbReference>
<dbReference type="NCBIfam" id="TIGR00060">
    <property type="entry name" value="L18_bact"/>
    <property type="match status" value="1"/>
</dbReference>
<dbReference type="PANTHER" id="PTHR12899">
    <property type="entry name" value="39S RIBOSOMAL PROTEIN L18, MITOCHONDRIAL"/>
    <property type="match status" value="1"/>
</dbReference>
<dbReference type="PANTHER" id="PTHR12899:SF3">
    <property type="entry name" value="LARGE RIBOSOMAL SUBUNIT PROTEIN UL18M"/>
    <property type="match status" value="1"/>
</dbReference>
<dbReference type="Pfam" id="PF00861">
    <property type="entry name" value="Ribosomal_L18p"/>
    <property type="match status" value="1"/>
</dbReference>
<dbReference type="SUPFAM" id="SSF53137">
    <property type="entry name" value="Translational machinery components"/>
    <property type="match status" value="1"/>
</dbReference>
<feature type="chain" id="PRO_1000086658" description="Large ribosomal subunit protein uL18">
    <location>
        <begin position="1"/>
        <end position="119"/>
    </location>
</feature>
<gene>
    <name evidence="1" type="primary">rplR</name>
    <name type="ordered locus">CKL_0240</name>
</gene>
<protein>
    <recommendedName>
        <fullName evidence="1">Large ribosomal subunit protein uL18</fullName>
    </recommendedName>
    <alternativeName>
        <fullName evidence="2">50S ribosomal protein L18</fullName>
    </alternativeName>
</protein>
<proteinExistence type="inferred from homology"/>
<sequence length="119" mass="13450">MFKKYDKKKLRKKRHLRVRKKIFGTSEVPRLSVYRSEKNIYAQIIDDIKGTTLVSASSVDKDFKGNGSNKEAAKVVGKMIADKAIEKGIKEVVFDRGGYIYHGRVQNLAEGAREGGLQF</sequence>
<name>RL18_CLOK5</name>